<gene>
    <name evidence="1" type="primary">dtd</name>
    <name type="ordered locus">SAV_4027</name>
</gene>
<sequence length="145" mass="15447">MRAVVQRVDGASVVVEGENGPETVGEINGEGLCVLVGVTHDDTEEKAAQLARKLWSVRMLADEKSCSDIDAPLLVISQFTLYGDARKGRRPTWNAAAPGDVAEPLVDEVVARLRALGATVATGRFGAQMRVSLTNDGPFTVLIEN</sequence>
<proteinExistence type="inferred from homology"/>
<name>DTD_STRAW</name>
<accession>Q82G71</accession>
<keyword id="KW-0963">Cytoplasm</keyword>
<keyword id="KW-0378">Hydrolase</keyword>
<keyword id="KW-1185">Reference proteome</keyword>
<keyword id="KW-0694">RNA-binding</keyword>
<keyword id="KW-0820">tRNA-binding</keyword>
<dbReference type="EC" id="3.1.1.96" evidence="1"/>
<dbReference type="EMBL" id="BA000030">
    <property type="protein sequence ID" value="BAC71739.1"/>
    <property type="molecule type" value="Genomic_DNA"/>
</dbReference>
<dbReference type="RefSeq" id="WP_010985456.1">
    <property type="nucleotide sequence ID" value="NZ_JZJK01000060.1"/>
</dbReference>
<dbReference type="SMR" id="Q82G71"/>
<dbReference type="GeneID" id="41541091"/>
<dbReference type="KEGG" id="sma:SAVERM_4027"/>
<dbReference type="eggNOG" id="COG1490">
    <property type="taxonomic scope" value="Bacteria"/>
</dbReference>
<dbReference type="HOGENOM" id="CLU_076901_1_2_11"/>
<dbReference type="OrthoDB" id="9801395at2"/>
<dbReference type="Proteomes" id="UP000000428">
    <property type="component" value="Chromosome"/>
</dbReference>
<dbReference type="GO" id="GO:0005737">
    <property type="term" value="C:cytoplasm"/>
    <property type="evidence" value="ECO:0007669"/>
    <property type="project" value="UniProtKB-SubCell"/>
</dbReference>
<dbReference type="GO" id="GO:0051500">
    <property type="term" value="F:D-tyrosyl-tRNA(Tyr) deacylase activity"/>
    <property type="evidence" value="ECO:0007669"/>
    <property type="project" value="TreeGrafter"/>
</dbReference>
<dbReference type="GO" id="GO:0106026">
    <property type="term" value="F:Gly-tRNA(Ala) deacylase activity"/>
    <property type="evidence" value="ECO:0007669"/>
    <property type="project" value="UniProtKB-UniRule"/>
</dbReference>
<dbReference type="GO" id="GO:0043908">
    <property type="term" value="F:Ser(Gly)-tRNA(Ala) hydrolase activity"/>
    <property type="evidence" value="ECO:0007669"/>
    <property type="project" value="UniProtKB-UniRule"/>
</dbReference>
<dbReference type="GO" id="GO:0000049">
    <property type="term" value="F:tRNA binding"/>
    <property type="evidence" value="ECO:0007669"/>
    <property type="project" value="UniProtKB-UniRule"/>
</dbReference>
<dbReference type="GO" id="GO:0019478">
    <property type="term" value="P:D-amino acid catabolic process"/>
    <property type="evidence" value="ECO:0007669"/>
    <property type="project" value="UniProtKB-UniRule"/>
</dbReference>
<dbReference type="CDD" id="cd00563">
    <property type="entry name" value="Dtyr_deacylase"/>
    <property type="match status" value="1"/>
</dbReference>
<dbReference type="FunFam" id="3.50.80.10:FF:000002">
    <property type="entry name" value="D-aminoacyl-tRNA deacylase"/>
    <property type="match status" value="1"/>
</dbReference>
<dbReference type="Gene3D" id="3.50.80.10">
    <property type="entry name" value="D-tyrosyl-tRNA(Tyr) deacylase"/>
    <property type="match status" value="1"/>
</dbReference>
<dbReference type="HAMAP" id="MF_00518">
    <property type="entry name" value="Deacylase_Dtd"/>
    <property type="match status" value="1"/>
</dbReference>
<dbReference type="InterPro" id="IPR003732">
    <property type="entry name" value="Daa-tRNA_deacyls_DTD"/>
</dbReference>
<dbReference type="InterPro" id="IPR023509">
    <property type="entry name" value="DTD-like_sf"/>
</dbReference>
<dbReference type="NCBIfam" id="TIGR00256">
    <property type="entry name" value="D-aminoacyl-tRNA deacylase"/>
    <property type="match status" value="1"/>
</dbReference>
<dbReference type="PANTHER" id="PTHR10472:SF5">
    <property type="entry name" value="D-AMINOACYL-TRNA DEACYLASE 1"/>
    <property type="match status" value="1"/>
</dbReference>
<dbReference type="PANTHER" id="PTHR10472">
    <property type="entry name" value="D-TYROSYL-TRNA TYR DEACYLASE"/>
    <property type="match status" value="1"/>
</dbReference>
<dbReference type="Pfam" id="PF02580">
    <property type="entry name" value="Tyr_Deacylase"/>
    <property type="match status" value="1"/>
</dbReference>
<dbReference type="SUPFAM" id="SSF69500">
    <property type="entry name" value="DTD-like"/>
    <property type="match status" value="1"/>
</dbReference>
<protein>
    <recommendedName>
        <fullName evidence="1">D-aminoacyl-tRNA deacylase</fullName>
        <shortName evidence="1">DTD</shortName>
        <ecNumber evidence="1">3.1.1.96</ecNumber>
    </recommendedName>
    <alternativeName>
        <fullName evidence="1">Gly-tRNA(Ala) deacylase</fullName>
    </alternativeName>
</protein>
<evidence type="ECO:0000255" key="1">
    <source>
        <dbReference type="HAMAP-Rule" id="MF_00518"/>
    </source>
</evidence>
<reference key="1">
    <citation type="journal article" date="2001" name="Proc. Natl. Acad. Sci. U.S.A.">
        <title>Genome sequence of an industrial microorganism Streptomyces avermitilis: deducing the ability of producing secondary metabolites.</title>
        <authorList>
            <person name="Omura S."/>
            <person name="Ikeda H."/>
            <person name="Ishikawa J."/>
            <person name="Hanamoto A."/>
            <person name="Takahashi C."/>
            <person name="Shinose M."/>
            <person name="Takahashi Y."/>
            <person name="Horikawa H."/>
            <person name="Nakazawa H."/>
            <person name="Osonoe T."/>
            <person name="Kikuchi H."/>
            <person name="Shiba T."/>
            <person name="Sakaki Y."/>
            <person name="Hattori M."/>
        </authorList>
    </citation>
    <scope>NUCLEOTIDE SEQUENCE [LARGE SCALE GENOMIC DNA]</scope>
    <source>
        <strain>ATCC 31267 / DSM 46492 / JCM 5070 / NBRC 14893 / NCIMB 12804 / NRRL 8165 / MA-4680</strain>
    </source>
</reference>
<reference key="2">
    <citation type="journal article" date="2003" name="Nat. Biotechnol.">
        <title>Complete genome sequence and comparative analysis of the industrial microorganism Streptomyces avermitilis.</title>
        <authorList>
            <person name="Ikeda H."/>
            <person name="Ishikawa J."/>
            <person name="Hanamoto A."/>
            <person name="Shinose M."/>
            <person name="Kikuchi H."/>
            <person name="Shiba T."/>
            <person name="Sakaki Y."/>
            <person name="Hattori M."/>
            <person name="Omura S."/>
        </authorList>
    </citation>
    <scope>NUCLEOTIDE SEQUENCE [LARGE SCALE GENOMIC DNA]</scope>
    <source>
        <strain>ATCC 31267 / DSM 46492 / JCM 5070 / NBRC 14893 / NCIMB 12804 / NRRL 8165 / MA-4680</strain>
    </source>
</reference>
<organism>
    <name type="scientific">Streptomyces avermitilis (strain ATCC 31267 / DSM 46492 / JCM 5070 / NBRC 14893 / NCIMB 12804 / NRRL 8165 / MA-4680)</name>
    <dbReference type="NCBI Taxonomy" id="227882"/>
    <lineage>
        <taxon>Bacteria</taxon>
        <taxon>Bacillati</taxon>
        <taxon>Actinomycetota</taxon>
        <taxon>Actinomycetes</taxon>
        <taxon>Kitasatosporales</taxon>
        <taxon>Streptomycetaceae</taxon>
        <taxon>Streptomyces</taxon>
    </lineage>
</organism>
<feature type="chain" id="PRO_0000164596" description="D-aminoacyl-tRNA deacylase">
    <location>
        <begin position="1"/>
        <end position="145"/>
    </location>
</feature>
<feature type="short sequence motif" description="Gly-cisPro motif, important for rejection of L-amino acids" evidence="1">
    <location>
        <begin position="137"/>
        <end position="138"/>
    </location>
</feature>
<comment type="function">
    <text evidence="1">An aminoacyl-tRNA editing enzyme that deacylates mischarged D-aminoacyl-tRNAs. Also deacylates mischarged glycyl-tRNA(Ala), protecting cells against glycine mischarging by AlaRS. Acts via tRNA-based rather than protein-based catalysis; rejects L-amino acids rather than detecting D-amino acids in the active site. By recycling D-aminoacyl-tRNA to D-amino acids and free tRNA molecules, this enzyme counteracts the toxicity associated with the formation of D-aminoacyl-tRNA entities in vivo and helps enforce protein L-homochirality.</text>
</comment>
<comment type="catalytic activity">
    <reaction evidence="1">
        <text>glycyl-tRNA(Ala) + H2O = tRNA(Ala) + glycine + H(+)</text>
        <dbReference type="Rhea" id="RHEA:53744"/>
        <dbReference type="Rhea" id="RHEA-COMP:9657"/>
        <dbReference type="Rhea" id="RHEA-COMP:13640"/>
        <dbReference type="ChEBI" id="CHEBI:15377"/>
        <dbReference type="ChEBI" id="CHEBI:15378"/>
        <dbReference type="ChEBI" id="CHEBI:57305"/>
        <dbReference type="ChEBI" id="CHEBI:78442"/>
        <dbReference type="ChEBI" id="CHEBI:78522"/>
        <dbReference type="EC" id="3.1.1.96"/>
    </reaction>
</comment>
<comment type="catalytic activity">
    <reaction evidence="1">
        <text>a D-aminoacyl-tRNA + H2O = a tRNA + a D-alpha-amino acid + H(+)</text>
        <dbReference type="Rhea" id="RHEA:13953"/>
        <dbReference type="Rhea" id="RHEA-COMP:10123"/>
        <dbReference type="Rhea" id="RHEA-COMP:10124"/>
        <dbReference type="ChEBI" id="CHEBI:15377"/>
        <dbReference type="ChEBI" id="CHEBI:15378"/>
        <dbReference type="ChEBI" id="CHEBI:59871"/>
        <dbReference type="ChEBI" id="CHEBI:78442"/>
        <dbReference type="ChEBI" id="CHEBI:79333"/>
        <dbReference type="EC" id="3.1.1.96"/>
    </reaction>
</comment>
<comment type="subunit">
    <text evidence="1">Homodimer.</text>
</comment>
<comment type="subcellular location">
    <subcellularLocation>
        <location evidence="1">Cytoplasm</location>
    </subcellularLocation>
</comment>
<comment type="domain">
    <text evidence="1">A Gly-cisPro motif from one monomer fits into the active site of the other monomer to allow specific chiral rejection of L-amino acids.</text>
</comment>
<comment type="similarity">
    <text evidence="1">Belongs to the DTD family.</text>
</comment>